<protein>
    <recommendedName>
        <fullName evidence="1">Small ribosomal subunit protein bS21</fullName>
    </recommendedName>
    <alternativeName>
        <fullName evidence="3">30S ribosomal protein S21</fullName>
    </alternativeName>
</protein>
<evidence type="ECO:0000255" key="1">
    <source>
        <dbReference type="HAMAP-Rule" id="MF_00358"/>
    </source>
</evidence>
<evidence type="ECO:0000256" key="2">
    <source>
        <dbReference type="SAM" id="MobiDB-lite"/>
    </source>
</evidence>
<evidence type="ECO:0000305" key="3"/>
<reference key="1">
    <citation type="journal article" date="2005" name="Infect. Immun.">
        <title>Comparative genomic analysis of Chlamydia trachomatis oculotropic and genitotropic strains.</title>
        <authorList>
            <person name="Carlson J.H."/>
            <person name="Porcella S.F."/>
            <person name="McClarty G."/>
            <person name="Caldwell H.D."/>
        </authorList>
    </citation>
    <scope>NUCLEOTIDE SEQUENCE [LARGE SCALE GENOMIC DNA]</scope>
    <source>
        <strain>ATCC VR-571B / DSM 19440 / HAR-13</strain>
    </source>
</reference>
<organism>
    <name type="scientific">Chlamydia trachomatis serovar A (strain ATCC VR-571B / DSM 19440 / HAR-13)</name>
    <dbReference type="NCBI Taxonomy" id="315277"/>
    <lineage>
        <taxon>Bacteria</taxon>
        <taxon>Pseudomonadati</taxon>
        <taxon>Chlamydiota</taxon>
        <taxon>Chlamydiia</taxon>
        <taxon>Chlamydiales</taxon>
        <taxon>Chlamydiaceae</taxon>
        <taxon>Chlamydia/Chlamydophila group</taxon>
        <taxon>Chlamydia</taxon>
    </lineage>
</organism>
<sequence>MPSVKVRVGEPIDRALRILKKKIDKEGILKTSKSHRFYDKPSVKKRAKSKAAAKYRGR</sequence>
<gene>
    <name evidence="1" type="primary">rpsU</name>
    <name type="ordered locus">CTA_0371</name>
</gene>
<name>RS21_CHLTA</name>
<dbReference type="EMBL" id="CP000051">
    <property type="protein sequence ID" value="AAX50606.1"/>
    <property type="molecule type" value="Genomic_DNA"/>
</dbReference>
<dbReference type="RefSeq" id="WP_009871693.1">
    <property type="nucleotide sequence ID" value="NC_007429.1"/>
</dbReference>
<dbReference type="SMR" id="Q3KM16"/>
<dbReference type="GeneID" id="1245980"/>
<dbReference type="KEGG" id="cta:CTA_0371"/>
<dbReference type="HOGENOM" id="CLU_159258_2_3_0"/>
<dbReference type="Proteomes" id="UP000002532">
    <property type="component" value="Chromosome"/>
</dbReference>
<dbReference type="GO" id="GO:1990904">
    <property type="term" value="C:ribonucleoprotein complex"/>
    <property type="evidence" value="ECO:0007669"/>
    <property type="project" value="UniProtKB-KW"/>
</dbReference>
<dbReference type="GO" id="GO:0005840">
    <property type="term" value="C:ribosome"/>
    <property type="evidence" value="ECO:0007669"/>
    <property type="project" value="UniProtKB-KW"/>
</dbReference>
<dbReference type="GO" id="GO:0003735">
    <property type="term" value="F:structural constituent of ribosome"/>
    <property type="evidence" value="ECO:0007669"/>
    <property type="project" value="InterPro"/>
</dbReference>
<dbReference type="GO" id="GO:0006412">
    <property type="term" value="P:translation"/>
    <property type="evidence" value="ECO:0007669"/>
    <property type="project" value="UniProtKB-UniRule"/>
</dbReference>
<dbReference type="Gene3D" id="1.20.5.1150">
    <property type="entry name" value="Ribosomal protein S8"/>
    <property type="match status" value="1"/>
</dbReference>
<dbReference type="HAMAP" id="MF_00358">
    <property type="entry name" value="Ribosomal_bS21"/>
    <property type="match status" value="1"/>
</dbReference>
<dbReference type="InterPro" id="IPR001911">
    <property type="entry name" value="Ribosomal_bS21"/>
</dbReference>
<dbReference type="InterPro" id="IPR038380">
    <property type="entry name" value="Ribosomal_bS21_sf"/>
</dbReference>
<dbReference type="NCBIfam" id="TIGR00030">
    <property type="entry name" value="S21p"/>
    <property type="match status" value="1"/>
</dbReference>
<dbReference type="Pfam" id="PF01165">
    <property type="entry name" value="Ribosomal_S21"/>
    <property type="match status" value="1"/>
</dbReference>
<dbReference type="PRINTS" id="PR00976">
    <property type="entry name" value="RIBOSOMALS21"/>
</dbReference>
<accession>Q3KM16</accession>
<keyword id="KW-0687">Ribonucleoprotein</keyword>
<keyword id="KW-0689">Ribosomal protein</keyword>
<feature type="chain" id="PRO_0000266651" description="Small ribosomal subunit protein bS21">
    <location>
        <begin position="1"/>
        <end position="58"/>
    </location>
</feature>
<feature type="region of interest" description="Disordered" evidence="2">
    <location>
        <begin position="37"/>
        <end position="58"/>
    </location>
</feature>
<feature type="compositionally biased region" description="Basic residues" evidence="2">
    <location>
        <begin position="43"/>
        <end position="58"/>
    </location>
</feature>
<comment type="similarity">
    <text evidence="1">Belongs to the bacterial ribosomal protein bS21 family.</text>
</comment>
<proteinExistence type="inferred from homology"/>